<evidence type="ECO:0000250" key="1">
    <source>
        <dbReference type="UniProtKB" id="P60590"/>
    </source>
</evidence>
<evidence type="ECO:0000269" key="2">
    <source ref="1"/>
</evidence>
<evidence type="ECO:0000303" key="3">
    <source ref="1"/>
</evidence>
<evidence type="ECO:0000305" key="4"/>
<evidence type="ECO:0000305" key="5">
    <source ref="1"/>
</evidence>
<accession>P61789</accession>
<comment type="function">
    <text evidence="2">Blocks calcium channels (Cav).</text>
</comment>
<comment type="subcellular location">
    <subcellularLocation>
        <location evidence="2">Secreted</location>
    </subcellularLocation>
</comment>
<comment type="tissue specificity">
    <text evidence="5">Expressed by the venom gland.</text>
</comment>
<comment type="domain">
    <text evidence="1">The presence of a 'disulfide through disulfide knot' structurally defines this protein as a knottin.</text>
</comment>
<comment type="mass spectrometry" mass="4221.02" method="Electrospray" evidence="2"/>
<comment type="similarity">
    <text evidence="4">Belongs to the neurotoxin 10 (Hwtx-1) family. 01 (AU5A) subfamily.</text>
</comment>
<sequence length="37" mass="4229">DDDCGWIMDDCTSDSDCCPNWVCSKTGFVKNICKYEM</sequence>
<dbReference type="SMR" id="P61789"/>
<dbReference type="ArachnoServer" id="AS000284">
    <property type="toxin name" value="omega-sparatoxin-Hv1a"/>
</dbReference>
<dbReference type="GO" id="GO:0005576">
    <property type="term" value="C:extracellular region"/>
    <property type="evidence" value="ECO:0007669"/>
    <property type="project" value="UniProtKB-SubCell"/>
</dbReference>
<dbReference type="GO" id="GO:0005246">
    <property type="term" value="F:calcium channel regulator activity"/>
    <property type="evidence" value="ECO:0007669"/>
    <property type="project" value="UniProtKB-KW"/>
</dbReference>
<dbReference type="GO" id="GO:0008200">
    <property type="term" value="F:ion channel inhibitor activity"/>
    <property type="evidence" value="ECO:0007669"/>
    <property type="project" value="InterPro"/>
</dbReference>
<dbReference type="GO" id="GO:0090729">
    <property type="term" value="F:toxin activity"/>
    <property type="evidence" value="ECO:0007669"/>
    <property type="project" value="UniProtKB-KW"/>
</dbReference>
<dbReference type="InterPro" id="IPR011696">
    <property type="entry name" value="Huwentoxin-1"/>
</dbReference>
<dbReference type="Pfam" id="PF07740">
    <property type="entry name" value="Toxin_12"/>
    <property type="match status" value="1"/>
</dbReference>
<name>TX5A_HETVE</name>
<keyword id="KW-0108">Calcium channel impairing toxin</keyword>
<keyword id="KW-0903">Direct protein sequencing</keyword>
<keyword id="KW-1015">Disulfide bond</keyword>
<keyword id="KW-0872">Ion channel impairing toxin</keyword>
<keyword id="KW-0960">Knottin</keyword>
<keyword id="KW-0528">Neurotoxin</keyword>
<keyword id="KW-0964">Secreted</keyword>
<keyword id="KW-0800">Toxin</keyword>
<keyword id="KW-1218">Voltage-gated calcium channel impairing toxin</keyword>
<proteinExistence type="evidence at protein level"/>
<protein>
    <recommendedName>
        <fullName evidence="4">Omega-sparatoxin-Hv1a</fullName>
        <shortName evidence="4">Omega-SPRTX-Hv1a</shortName>
    </recommendedName>
    <alternativeName>
        <fullName evidence="3">Toxin AU5A</fullName>
    </alternativeName>
</protein>
<organism>
    <name type="scientific">Heteropoda venatoria</name>
    <name type="common">Brown huntsman spider</name>
    <name type="synonym">Aranea venatoria</name>
    <dbReference type="NCBI Taxonomy" id="152925"/>
    <lineage>
        <taxon>Eukaryota</taxon>
        <taxon>Metazoa</taxon>
        <taxon>Ecdysozoa</taxon>
        <taxon>Arthropoda</taxon>
        <taxon>Chelicerata</taxon>
        <taxon>Arachnida</taxon>
        <taxon>Araneae</taxon>
        <taxon>Araneomorphae</taxon>
        <taxon>Entelegynae</taxon>
        <taxon>Dionycha</taxon>
        <taxon>Sparassidae</taxon>
        <taxon>Heteropoda</taxon>
    </lineage>
</organism>
<reference key="1">
    <citation type="patent" date="1997-05-06" number="US5627154">
        <title>Calcium channel blocking polypeptides from Heteropoda venatoria.</title>
        <authorList>
            <person name="Kelbaugh P.R."/>
            <person name="Saccomano N.A."/>
            <person name="Volkmann R.A."/>
        </authorList>
    </citation>
    <scope>PROTEIN SEQUENCE</scope>
    <scope>FUNCTION</scope>
    <scope>SUBCELLULAR LOCATION</scope>
    <scope>DISULFIDE BONDS</scope>
    <scope>MASS SPECTROMETRY</scope>
    <source>
        <tissue>Venom</tissue>
    </source>
</reference>
<feature type="peptide" id="PRO_0000045021" description="Omega-sparatoxin-Hv1a" evidence="2">
    <location>
        <begin position="1"/>
        <end position="37"/>
    </location>
</feature>
<feature type="disulfide bond" evidence="1">
    <location>
        <begin position="4"/>
        <end position="18"/>
    </location>
</feature>
<feature type="disulfide bond" evidence="1">
    <location>
        <begin position="11"/>
        <end position="23"/>
    </location>
</feature>
<feature type="disulfide bond" evidence="1">
    <location>
        <begin position="17"/>
        <end position="33"/>
    </location>
</feature>